<name>PROQ_ECOLC</name>
<protein>
    <recommendedName>
        <fullName evidence="1">RNA chaperone ProQ</fullName>
    </recommendedName>
</protein>
<sequence length="232" mass="25862">MENQPKLNSSKEVIAFLAERFPHCFSAEGEARPLKIGIFQDLVDRVAGEMNLSKTQLRSALRLYTSSWRYLYGVKPGATRVDLDGNPCGELDEQHVEHARKQLEEAKARVQAQRAEQQAKKREAAAAAGEKEDAPRRERKPRPTTPRRKEGAERKPRAQKPVEKAPKTVKAPREEQHTPVSDISALTVGQALKVKAGQNAMDATVLEITKDGVRVQLNSGMSLIVRAEHLVF</sequence>
<comment type="function">
    <text evidence="1">RNA chaperone with significant RNA binding, RNA strand exchange and RNA duplexing activities. May regulate ProP activity through an RNA-based, post-transcriptional mechanism.</text>
</comment>
<comment type="subcellular location">
    <subcellularLocation>
        <location evidence="1">Cytoplasm</location>
    </subcellularLocation>
</comment>
<comment type="similarity">
    <text evidence="1">Belongs to the ProQ family.</text>
</comment>
<gene>
    <name evidence="1" type="primary">proQ</name>
    <name type="ordered locus">EcolC_1801</name>
</gene>
<proteinExistence type="inferred from homology"/>
<organism>
    <name type="scientific">Escherichia coli (strain ATCC 8739 / DSM 1576 / NBRC 3972 / NCIMB 8545 / WDCM 00012 / Crooks)</name>
    <dbReference type="NCBI Taxonomy" id="481805"/>
    <lineage>
        <taxon>Bacteria</taxon>
        <taxon>Pseudomonadati</taxon>
        <taxon>Pseudomonadota</taxon>
        <taxon>Gammaproteobacteria</taxon>
        <taxon>Enterobacterales</taxon>
        <taxon>Enterobacteriaceae</taxon>
        <taxon>Escherichia</taxon>
    </lineage>
</organism>
<keyword id="KW-0143">Chaperone</keyword>
<keyword id="KW-0963">Cytoplasm</keyword>
<keyword id="KW-0694">RNA-binding</keyword>
<reference key="1">
    <citation type="submission" date="2008-02" db="EMBL/GenBank/DDBJ databases">
        <title>Complete sequence of Escherichia coli C str. ATCC 8739.</title>
        <authorList>
            <person name="Copeland A."/>
            <person name="Lucas S."/>
            <person name="Lapidus A."/>
            <person name="Glavina del Rio T."/>
            <person name="Dalin E."/>
            <person name="Tice H."/>
            <person name="Bruce D."/>
            <person name="Goodwin L."/>
            <person name="Pitluck S."/>
            <person name="Kiss H."/>
            <person name="Brettin T."/>
            <person name="Detter J.C."/>
            <person name="Han C."/>
            <person name="Kuske C.R."/>
            <person name="Schmutz J."/>
            <person name="Larimer F."/>
            <person name="Land M."/>
            <person name="Hauser L."/>
            <person name="Kyrpides N."/>
            <person name="Mikhailova N."/>
            <person name="Ingram L."/>
            <person name="Richardson P."/>
        </authorList>
    </citation>
    <scope>NUCLEOTIDE SEQUENCE [LARGE SCALE GENOMIC DNA]</scope>
    <source>
        <strain>ATCC 8739 / DSM 1576 / NBRC 3972 / NCIMB 8545 / WDCM 00012 / Crooks</strain>
    </source>
</reference>
<evidence type="ECO:0000255" key="1">
    <source>
        <dbReference type="HAMAP-Rule" id="MF_00749"/>
    </source>
</evidence>
<evidence type="ECO:0000256" key="2">
    <source>
        <dbReference type="SAM" id="MobiDB-lite"/>
    </source>
</evidence>
<feature type="chain" id="PRO_1000083486" description="RNA chaperone ProQ">
    <location>
        <begin position="1"/>
        <end position="232"/>
    </location>
</feature>
<feature type="region of interest" description="Disordered" evidence="2">
    <location>
        <begin position="105"/>
        <end position="182"/>
    </location>
</feature>
<feature type="compositionally biased region" description="Basic and acidic residues" evidence="2">
    <location>
        <begin position="117"/>
        <end position="136"/>
    </location>
</feature>
<feature type="compositionally biased region" description="Basic residues" evidence="2">
    <location>
        <begin position="137"/>
        <end position="146"/>
    </location>
</feature>
<feature type="compositionally biased region" description="Basic and acidic residues" evidence="2">
    <location>
        <begin position="147"/>
        <end position="177"/>
    </location>
</feature>
<accession>B1J0Q7</accession>
<dbReference type="EMBL" id="CP000946">
    <property type="protein sequence ID" value="ACA77451.1"/>
    <property type="molecule type" value="Genomic_DNA"/>
</dbReference>
<dbReference type="RefSeq" id="WP_000431370.1">
    <property type="nucleotide sequence ID" value="NZ_MTFT01000011.1"/>
</dbReference>
<dbReference type="SMR" id="B1J0Q7"/>
<dbReference type="GeneID" id="93776081"/>
<dbReference type="KEGG" id="ecl:EcolC_1801"/>
<dbReference type="HOGENOM" id="CLU_113254_0_0_6"/>
<dbReference type="GO" id="GO:0005829">
    <property type="term" value="C:cytosol"/>
    <property type="evidence" value="ECO:0007669"/>
    <property type="project" value="TreeGrafter"/>
</dbReference>
<dbReference type="GO" id="GO:0033592">
    <property type="term" value="F:RNA strand annealing activity"/>
    <property type="evidence" value="ECO:0007669"/>
    <property type="project" value="UniProtKB-UniRule"/>
</dbReference>
<dbReference type="GO" id="GO:0034057">
    <property type="term" value="F:RNA strand-exchange activity"/>
    <property type="evidence" value="ECO:0007669"/>
    <property type="project" value="UniProtKB-UniRule"/>
</dbReference>
<dbReference type="GO" id="GO:0010608">
    <property type="term" value="P:post-transcriptional regulation of gene expression"/>
    <property type="evidence" value="ECO:0007669"/>
    <property type="project" value="InterPro"/>
</dbReference>
<dbReference type="FunFam" id="1.10.1710.10:FF:000001">
    <property type="entry name" value="RNA chaperone ProQ"/>
    <property type="match status" value="1"/>
</dbReference>
<dbReference type="Gene3D" id="1.10.1710.10">
    <property type="entry name" value="ProQ/FinO domain"/>
    <property type="match status" value="1"/>
</dbReference>
<dbReference type="HAMAP" id="MF_00749">
    <property type="entry name" value="ProQ"/>
    <property type="match status" value="1"/>
</dbReference>
<dbReference type="InterPro" id="IPR023529">
    <property type="entry name" value="ProQ"/>
</dbReference>
<dbReference type="InterPro" id="IPR016103">
    <property type="entry name" value="ProQ/FinO"/>
</dbReference>
<dbReference type="InterPro" id="IPR036442">
    <property type="entry name" value="ProQ/FinO_sf"/>
</dbReference>
<dbReference type="InterPro" id="IPR035236">
    <property type="entry name" value="ProQ_C"/>
</dbReference>
<dbReference type="NCBIfam" id="NF003434">
    <property type="entry name" value="PRK04950.1"/>
    <property type="match status" value="1"/>
</dbReference>
<dbReference type="PANTHER" id="PTHR38106">
    <property type="entry name" value="RNA CHAPERONE PROQ"/>
    <property type="match status" value="1"/>
</dbReference>
<dbReference type="PANTHER" id="PTHR38106:SF1">
    <property type="entry name" value="RNA CHAPERONE PROQ"/>
    <property type="match status" value="1"/>
</dbReference>
<dbReference type="Pfam" id="PF04352">
    <property type="entry name" value="ProQ"/>
    <property type="match status" value="1"/>
</dbReference>
<dbReference type="Pfam" id="PF17516">
    <property type="entry name" value="ProQ_C"/>
    <property type="match status" value="1"/>
</dbReference>
<dbReference type="SMART" id="SM00945">
    <property type="entry name" value="ProQ"/>
    <property type="match status" value="1"/>
</dbReference>
<dbReference type="SUPFAM" id="SSF48657">
    <property type="entry name" value="FinO-like"/>
    <property type="match status" value="1"/>
</dbReference>